<organism>
    <name type="scientific">Schizosaccharomyces pombe (strain 972 / ATCC 24843)</name>
    <name type="common">Fission yeast</name>
    <dbReference type="NCBI Taxonomy" id="284812"/>
    <lineage>
        <taxon>Eukaryota</taxon>
        <taxon>Fungi</taxon>
        <taxon>Dikarya</taxon>
        <taxon>Ascomycota</taxon>
        <taxon>Taphrinomycotina</taxon>
        <taxon>Schizosaccharomycetes</taxon>
        <taxon>Schizosaccharomycetales</taxon>
        <taxon>Schizosaccharomycetaceae</taxon>
        <taxon>Schizosaccharomyces</taxon>
    </lineage>
</organism>
<name>YCPD_SCHPO</name>
<keyword id="KW-0012">Acyltransferase</keyword>
<keyword id="KW-0963">Cytoplasm</keyword>
<keyword id="KW-0539">Nucleus</keyword>
<keyword id="KW-1185">Reference proteome</keyword>
<keyword id="KW-0808">Transferase</keyword>
<dbReference type="EC" id="2.3.1.-"/>
<dbReference type="EMBL" id="CU329672">
    <property type="protein sequence ID" value="CAA20373.1"/>
    <property type="molecule type" value="Genomic_DNA"/>
</dbReference>
<dbReference type="PIR" id="T41544">
    <property type="entry name" value="T41544"/>
</dbReference>
<dbReference type="SMR" id="O74519"/>
<dbReference type="BioGRID" id="276096">
    <property type="interactions" value="2"/>
</dbReference>
<dbReference type="FunCoup" id="O74519">
    <property type="interactions" value="252"/>
</dbReference>
<dbReference type="STRING" id="284812.O74519"/>
<dbReference type="PaxDb" id="4896-SPCC663.13c.1"/>
<dbReference type="EnsemblFungi" id="SPCC663.13c.1">
    <property type="protein sequence ID" value="SPCC663.13c.1:pep"/>
    <property type="gene ID" value="SPCC663.13c"/>
</dbReference>
<dbReference type="KEGG" id="spo:2539534"/>
<dbReference type="PomBase" id="SPCC663.13c"/>
<dbReference type="VEuPathDB" id="FungiDB:SPCC663.13c"/>
<dbReference type="eggNOG" id="KOG3138">
    <property type="taxonomic scope" value="Eukaryota"/>
</dbReference>
<dbReference type="HOGENOM" id="CLU_013985_5_3_1"/>
<dbReference type="InParanoid" id="O74519"/>
<dbReference type="OMA" id="RCKKETH"/>
<dbReference type="PhylomeDB" id="O74519"/>
<dbReference type="PRO" id="PR:O74519"/>
<dbReference type="Proteomes" id="UP000002485">
    <property type="component" value="Chromosome III"/>
</dbReference>
<dbReference type="GO" id="GO:0005829">
    <property type="term" value="C:cytosol"/>
    <property type="evidence" value="ECO:0007005"/>
    <property type="project" value="PomBase"/>
</dbReference>
<dbReference type="GO" id="GO:0031415">
    <property type="term" value="C:NatA complex"/>
    <property type="evidence" value="ECO:0000318"/>
    <property type="project" value="GO_Central"/>
</dbReference>
<dbReference type="GO" id="GO:0005634">
    <property type="term" value="C:nucleus"/>
    <property type="evidence" value="ECO:0007005"/>
    <property type="project" value="PomBase"/>
</dbReference>
<dbReference type="GO" id="GO:0004596">
    <property type="term" value="F:protein-N-terminal amino-acid acetyltransferase activity"/>
    <property type="evidence" value="ECO:0000255"/>
    <property type="project" value="PomBase"/>
</dbReference>
<dbReference type="GO" id="GO:0007064">
    <property type="term" value="P:mitotic sister chromatid cohesion"/>
    <property type="evidence" value="ECO:0000318"/>
    <property type="project" value="GO_Central"/>
</dbReference>
<dbReference type="GO" id="GO:0051604">
    <property type="term" value="P:protein maturation"/>
    <property type="evidence" value="ECO:0000305"/>
    <property type="project" value="PomBase"/>
</dbReference>
<dbReference type="CDD" id="cd04301">
    <property type="entry name" value="NAT_SF"/>
    <property type="match status" value="1"/>
</dbReference>
<dbReference type="Gene3D" id="3.40.630.30">
    <property type="match status" value="1"/>
</dbReference>
<dbReference type="InterPro" id="IPR016181">
    <property type="entry name" value="Acyl_CoA_acyltransferase"/>
</dbReference>
<dbReference type="InterPro" id="IPR000182">
    <property type="entry name" value="GNAT_dom"/>
</dbReference>
<dbReference type="InterPro" id="IPR051556">
    <property type="entry name" value="N-term/lysine_N-AcTrnsfr"/>
</dbReference>
<dbReference type="PANTHER" id="PTHR42919">
    <property type="entry name" value="N-ALPHA-ACETYLTRANSFERASE"/>
    <property type="match status" value="1"/>
</dbReference>
<dbReference type="PANTHER" id="PTHR42919:SF8">
    <property type="entry name" value="N-ALPHA-ACETYLTRANSFERASE 50"/>
    <property type="match status" value="1"/>
</dbReference>
<dbReference type="Pfam" id="PF00583">
    <property type="entry name" value="Acetyltransf_1"/>
    <property type="match status" value="1"/>
</dbReference>
<dbReference type="SUPFAM" id="SSF55729">
    <property type="entry name" value="Acyl-CoA N-acyltransferases (Nat)"/>
    <property type="match status" value="1"/>
</dbReference>
<dbReference type="PROSITE" id="PS51186">
    <property type="entry name" value="GNAT"/>
    <property type="match status" value="1"/>
</dbReference>
<reference key="1">
    <citation type="journal article" date="2002" name="Nature">
        <title>The genome sequence of Schizosaccharomyces pombe.</title>
        <authorList>
            <person name="Wood V."/>
            <person name="Gwilliam R."/>
            <person name="Rajandream M.A."/>
            <person name="Lyne M.H."/>
            <person name="Lyne R."/>
            <person name="Stewart A."/>
            <person name="Sgouros J.G."/>
            <person name="Peat N."/>
            <person name="Hayles J."/>
            <person name="Baker S.G."/>
            <person name="Basham D."/>
            <person name="Bowman S."/>
            <person name="Brooks K."/>
            <person name="Brown D."/>
            <person name="Brown S."/>
            <person name="Chillingworth T."/>
            <person name="Churcher C.M."/>
            <person name="Collins M."/>
            <person name="Connor R."/>
            <person name="Cronin A."/>
            <person name="Davis P."/>
            <person name="Feltwell T."/>
            <person name="Fraser A."/>
            <person name="Gentles S."/>
            <person name="Goble A."/>
            <person name="Hamlin N."/>
            <person name="Harris D.E."/>
            <person name="Hidalgo J."/>
            <person name="Hodgson G."/>
            <person name="Holroyd S."/>
            <person name="Hornsby T."/>
            <person name="Howarth S."/>
            <person name="Huckle E.J."/>
            <person name="Hunt S."/>
            <person name="Jagels K."/>
            <person name="James K.D."/>
            <person name="Jones L."/>
            <person name="Jones M."/>
            <person name="Leather S."/>
            <person name="McDonald S."/>
            <person name="McLean J."/>
            <person name="Mooney P."/>
            <person name="Moule S."/>
            <person name="Mungall K.L."/>
            <person name="Murphy L.D."/>
            <person name="Niblett D."/>
            <person name="Odell C."/>
            <person name="Oliver K."/>
            <person name="O'Neil S."/>
            <person name="Pearson D."/>
            <person name="Quail M.A."/>
            <person name="Rabbinowitsch E."/>
            <person name="Rutherford K.M."/>
            <person name="Rutter S."/>
            <person name="Saunders D."/>
            <person name="Seeger K."/>
            <person name="Sharp S."/>
            <person name="Skelton J."/>
            <person name="Simmonds M.N."/>
            <person name="Squares R."/>
            <person name="Squares S."/>
            <person name="Stevens K."/>
            <person name="Taylor K."/>
            <person name="Taylor R.G."/>
            <person name="Tivey A."/>
            <person name="Walsh S.V."/>
            <person name="Warren T."/>
            <person name="Whitehead S."/>
            <person name="Woodward J.R."/>
            <person name="Volckaert G."/>
            <person name="Aert R."/>
            <person name="Robben J."/>
            <person name="Grymonprez B."/>
            <person name="Weltjens I."/>
            <person name="Vanstreels E."/>
            <person name="Rieger M."/>
            <person name="Schaefer M."/>
            <person name="Mueller-Auer S."/>
            <person name="Gabel C."/>
            <person name="Fuchs M."/>
            <person name="Duesterhoeft A."/>
            <person name="Fritzc C."/>
            <person name="Holzer E."/>
            <person name="Moestl D."/>
            <person name="Hilbert H."/>
            <person name="Borzym K."/>
            <person name="Langer I."/>
            <person name="Beck A."/>
            <person name="Lehrach H."/>
            <person name="Reinhardt R."/>
            <person name="Pohl T.M."/>
            <person name="Eger P."/>
            <person name="Zimmermann W."/>
            <person name="Wedler H."/>
            <person name="Wambutt R."/>
            <person name="Purnelle B."/>
            <person name="Goffeau A."/>
            <person name="Cadieu E."/>
            <person name="Dreano S."/>
            <person name="Gloux S."/>
            <person name="Lelaure V."/>
            <person name="Mottier S."/>
            <person name="Galibert F."/>
            <person name="Aves S.J."/>
            <person name="Xiang Z."/>
            <person name="Hunt C."/>
            <person name="Moore K."/>
            <person name="Hurst S.M."/>
            <person name="Lucas M."/>
            <person name="Rochet M."/>
            <person name="Gaillardin C."/>
            <person name="Tallada V.A."/>
            <person name="Garzon A."/>
            <person name="Thode G."/>
            <person name="Daga R.R."/>
            <person name="Cruzado L."/>
            <person name="Jimenez J."/>
            <person name="Sanchez M."/>
            <person name="del Rey F."/>
            <person name="Benito J."/>
            <person name="Dominguez A."/>
            <person name="Revuelta J.L."/>
            <person name="Moreno S."/>
            <person name="Armstrong J."/>
            <person name="Forsburg S.L."/>
            <person name="Cerutti L."/>
            <person name="Lowe T."/>
            <person name="McCombie W.R."/>
            <person name="Paulsen I."/>
            <person name="Potashkin J."/>
            <person name="Shpakovski G.V."/>
            <person name="Ussery D."/>
            <person name="Barrell B.G."/>
            <person name="Nurse P."/>
        </authorList>
    </citation>
    <scope>NUCLEOTIDE SEQUENCE [LARGE SCALE GENOMIC DNA]</scope>
    <source>
        <strain>972 / ATCC 24843</strain>
    </source>
</reference>
<reference key="2">
    <citation type="journal article" date="2006" name="Nat. Biotechnol.">
        <title>ORFeome cloning and global analysis of protein localization in the fission yeast Schizosaccharomyces pombe.</title>
        <authorList>
            <person name="Matsuyama A."/>
            <person name="Arai R."/>
            <person name="Yashiroda Y."/>
            <person name="Shirai A."/>
            <person name="Kamata A."/>
            <person name="Sekido S."/>
            <person name="Kobayashi Y."/>
            <person name="Hashimoto A."/>
            <person name="Hamamoto M."/>
            <person name="Hiraoka Y."/>
            <person name="Horinouchi S."/>
            <person name="Yoshida M."/>
        </authorList>
    </citation>
    <scope>SUBCELLULAR LOCATION [LARGE SCALE ANALYSIS]</scope>
</reference>
<accession>O74519</accession>
<gene>
    <name type="ORF">SPCC663.13c</name>
</gene>
<protein>
    <recommendedName>
        <fullName>Uncharacterized N-acetyltransferase C663.13c</fullName>
        <ecNumber>2.3.1.-</ecNumber>
    </recommendedName>
</protein>
<proteinExistence type="inferred from homology"/>
<comment type="subcellular location">
    <subcellularLocation>
        <location evidence="2">Cytoplasm</location>
    </subcellularLocation>
    <subcellularLocation>
        <location evidence="2">Nucleus</location>
    </subcellularLocation>
</comment>
<comment type="similarity">
    <text evidence="3">Belongs to the acetyltransferase family.</text>
</comment>
<feature type="chain" id="PRO_0000310294" description="Uncharacterized N-acetyltransferase C663.13c">
    <location>
        <begin position="1"/>
        <end position="144"/>
    </location>
</feature>
<feature type="domain" description="N-acetyltransferase" evidence="1">
    <location>
        <begin position="2"/>
        <end position="144"/>
    </location>
</feature>
<evidence type="ECO:0000255" key="1">
    <source>
        <dbReference type="PROSITE-ProRule" id="PRU00532"/>
    </source>
</evidence>
<evidence type="ECO:0000269" key="2">
    <source>
    </source>
</evidence>
<evidence type="ECO:0000305" key="3"/>
<sequence length="144" mass="16323">MIELDAINPNNLKILEVINEKCFDPEIIIFPTSFYKDTISVGPLAQYAYFNQVCVGAVRCKKETHNKSHKIQILSLAVLPAYRNRSIGTKLLEYACETAAEGKAKEIYIKLSPKLDVSEWFIHRGFIIDESSKTEDSVLLSKKL</sequence>